<proteinExistence type="evidence at protein level"/>
<sequence>MAASAPPPPDKLEGGGGPAPPPAPPSTGRKQGKAGLQMKSPEKKRRKSNTQGPAYSHLTEFAPPPTPMVDHLVASNPFEDDFGAPKVGVAAPPFLGSPVPFGGFRVQGGMAGQVPPGYSTGGGGGPQPLRRQPPPFPPNPMGPAFNMPPQGPGYPPPGNMNFPSQPFNQPLGQNFSPPSGQMMPGPVGGFGPMISPTMGQPPRAELGPPSLSQRFAQPGAPFGPSPLQRPGQGLPSLPPNTSPFPGPDPGFPGPGGEDGGKPLNPPASTAFPQEPHSGSPAAAVNGNQPSFPPNSSGRGGGTPDANSLAPPGKAGGGSGPQPPPGLVYPCGACRSEVNDDQDAILCEASCQKWFHRECTGMTESAYGLLTTEASAVWACDLCLKTKEIQSVYIREGMGQLVAANDG</sequence>
<feature type="initiator methionine" description="Removed" evidence="6">
    <location>
        <position position="1"/>
    </location>
</feature>
<feature type="chain" id="PRO_0000097123" description="Pygopus homolog 2">
    <location>
        <begin position="2"/>
        <end position="406"/>
    </location>
</feature>
<feature type="zinc finger region" description="PHD-type" evidence="2">
    <location>
        <begin position="327"/>
        <end position="385"/>
    </location>
</feature>
<feature type="region of interest" description="Disordered" evidence="3">
    <location>
        <begin position="1"/>
        <end position="73"/>
    </location>
</feature>
<feature type="region of interest" description="Disordered" evidence="3">
    <location>
        <begin position="106"/>
        <end position="323"/>
    </location>
</feature>
<feature type="short sequence motif" description="Nuclear localization signal" evidence="1">
    <location>
        <begin position="41"/>
        <end position="47"/>
    </location>
</feature>
<feature type="compositionally biased region" description="Pro residues" evidence="3">
    <location>
        <begin position="131"/>
        <end position="141"/>
    </location>
</feature>
<feature type="compositionally biased region" description="Pro residues" evidence="3">
    <location>
        <begin position="149"/>
        <end position="158"/>
    </location>
</feature>
<feature type="compositionally biased region" description="Polar residues" evidence="3">
    <location>
        <begin position="164"/>
        <end position="179"/>
    </location>
</feature>
<feature type="compositionally biased region" description="Pro residues" evidence="3">
    <location>
        <begin position="236"/>
        <end position="252"/>
    </location>
</feature>
<feature type="compositionally biased region" description="Polar residues" evidence="3">
    <location>
        <begin position="285"/>
        <end position="296"/>
    </location>
</feature>
<feature type="modified residue" description="N-acetylalanine" evidence="6">
    <location>
        <position position="2"/>
    </location>
</feature>
<feature type="modified residue" description="Phosphoserine" evidence="8 9">
    <location>
        <position position="40"/>
    </location>
</feature>
<feature type="modified residue" description="Phosphothreonine" evidence="5 7 9 10">
    <location>
        <position position="302"/>
    </location>
</feature>
<feature type="sequence conflict" description="In Ref. 3; AAL55782." evidence="4" ref="3">
    <original>P</original>
    <variation>Q</variation>
    <location>
        <position position="157"/>
    </location>
</feature>
<feature type="sequence conflict" description="In Ref. 3; AAL55782." evidence="4" ref="3">
    <original>P</original>
    <variation>L</variation>
    <location>
        <position position="170"/>
    </location>
</feature>
<feature type="turn" evidence="12">
    <location>
        <begin position="331"/>
        <end position="333"/>
    </location>
</feature>
<feature type="strand" evidence="12">
    <location>
        <begin position="343"/>
        <end position="346"/>
    </location>
</feature>
<feature type="turn" evidence="12">
    <location>
        <begin position="347"/>
        <end position="350"/>
    </location>
</feature>
<feature type="strand" evidence="12">
    <location>
        <begin position="353"/>
        <end position="355"/>
    </location>
</feature>
<feature type="helix" evidence="12">
    <location>
        <begin position="356"/>
        <end position="358"/>
    </location>
</feature>
<feature type="helix" evidence="12">
    <location>
        <begin position="363"/>
        <end position="371"/>
    </location>
</feature>
<feature type="strand" evidence="12">
    <location>
        <begin position="375"/>
        <end position="377"/>
    </location>
</feature>
<feature type="helix" evidence="11">
    <location>
        <begin position="380"/>
        <end position="384"/>
    </location>
</feature>
<feature type="turn" evidence="11">
    <location>
        <begin position="385"/>
        <end position="387"/>
    </location>
</feature>
<keyword id="KW-0002">3D-structure</keyword>
<keyword id="KW-0007">Acetylation</keyword>
<keyword id="KW-0479">Metal-binding</keyword>
<keyword id="KW-0539">Nucleus</keyword>
<keyword id="KW-0597">Phosphoprotein</keyword>
<keyword id="KW-1267">Proteomics identification</keyword>
<keyword id="KW-1185">Reference proteome</keyword>
<keyword id="KW-0879">Wnt signaling pathway</keyword>
<keyword id="KW-0862">Zinc</keyword>
<keyword id="KW-0863">Zinc-finger</keyword>
<accession>Q9BRQ0</accession>
<accession>Q8WYZ4</accession>
<accession>Q96CY2</accession>
<organism>
    <name type="scientific">Homo sapiens</name>
    <name type="common">Human</name>
    <dbReference type="NCBI Taxonomy" id="9606"/>
    <lineage>
        <taxon>Eukaryota</taxon>
        <taxon>Metazoa</taxon>
        <taxon>Chordata</taxon>
        <taxon>Craniata</taxon>
        <taxon>Vertebrata</taxon>
        <taxon>Euteleostomi</taxon>
        <taxon>Mammalia</taxon>
        <taxon>Eutheria</taxon>
        <taxon>Euarchontoglires</taxon>
        <taxon>Primates</taxon>
        <taxon>Haplorrhini</taxon>
        <taxon>Catarrhini</taxon>
        <taxon>Hominidae</taxon>
        <taxon>Homo</taxon>
    </lineage>
</organism>
<evidence type="ECO:0000255" key="1"/>
<evidence type="ECO:0000255" key="2">
    <source>
        <dbReference type="PROSITE-ProRule" id="PRU00146"/>
    </source>
</evidence>
<evidence type="ECO:0000256" key="3">
    <source>
        <dbReference type="SAM" id="MobiDB-lite"/>
    </source>
</evidence>
<evidence type="ECO:0000305" key="4"/>
<evidence type="ECO:0007744" key="5">
    <source>
    </source>
</evidence>
<evidence type="ECO:0007744" key="6">
    <source>
    </source>
</evidence>
<evidence type="ECO:0007744" key="7">
    <source>
    </source>
</evidence>
<evidence type="ECO:0007744" key="8">
    <source>
    </source>
</evidence>
<evidence type="ECO:0007744" key="9">
    <source>
    </source>
</evidence>
<evidence type="ECO:0007744" key="10">
    <source>
    </source>
</evidence>
<evidence type="ECO:0007829" key="11">
    <source>
        <dbReference type="PDB" id="2XB1"/>
    </source>
</evidence>
<evidence type="ECO:0007829" key="12">
    <source>
        <dbReference type="PDB" id="4UP0"/>
    </source>
</evidence>
<protein>
    <recommendedName>
        <fullName>Pygopus homolog 2</fullName>
    </recommendedName>
</protein>
<dbReference type="EMBL" id="AF457208">
    <property type="protein sequence ID" value="AAL91371.1"/>
    <property type="molecule type" value="mRNA"/>
</dbReference>
<dbReference type="EMBL" id="BC006132">
    <property type="protein sequence ID" value="AAH06132.2"/>
    <property type="molecule type" value="mRNA"/>
</dbReference>
<dbReference type="EMBL" id="BC013725">
    <property type="protein sequence ID" value="AAH13725.1"/>
    <property type="molecule type" value="mRNA"/>
</dbReference>
<dbReference type="EMBL" id="BC032099">
    <property type="protein sequence ID" value="AAH32099.1"/>
    <property type="molecule type" value="mRNA"/>
</dbReference>
<dbReference type="EMBL" id="AF289598">
    <property type="protein sequence ID" value="AAL55782.1"/>
    <property type="status" value="ALT_SEQ"/>
    <property type="molecule type" value="mRNA"/>
</dbReference>
<dbReference type="CCDS" id="CCDS1075.1"/>
<dbReference type="RefSeq" id="NP_612157.1">
    <property type="nucleotide sequence ID" value="NM_138300.4"/>
</dbReference>
<dbReference type="PDB" id="2XB1">
    <property type="method" value="X-ray"/>
    <property type="resolution" value="1.90 A"/>
    <property type="chains" value="A/C=325-387"/>
</dbReference>
<dbReference type="PDB" id="4UP0">
    <property type="method" value="X-ray"/>
    <property type="resolution" value="1.28 A"/>
    <property type="chains" value="A=327-387"/>
</dbReference>
<dbReference type="PDB" id="4UP5">
    <property type="method" value="X-ray"/>
    <property type="resolution" value="1.65 A"/>
    <property type="chains" value="A=327-387"/>
</dbReference>
<dbReference type="PDB" id="8HIB">
    <property type="method" value="X-ray"/>
    <property type="resolution" value="2.45 A"/>
    <property type="chains" value="D=59-84"/>
</dbReference>
<dbReference type="PDBsum" id="2XB1"/>
<dbReference type="PDBsum" id="4UP0"/>
<dbReference type="PDBsum" id="4UP5"/>
<dbReference type="PDBsum" id="8HIB"/>
<dbReference type="SMR" id="Q9BRQ0"/>
<dbReference type="BioGRID" id="124760">
    <property type="interactions" value="50"/>
</dbReference>
<dbReference type="FunCoup" id="Q9BRQ0">
    <property type="interactions" value="1436"/>
</dbReference>
<dbReference type="IntAct" id="Q9BRQ0">
    <property type="interactions" value="31"/>
</dbReference>
<dbReference type="MINT" id="Q9BRQ0"/>
<dbReference type="STRING" id="9606.ENSP00000357442"/>
<dbReference type="GlyGen" id="Q9BRQ0">
    <property type="glycosylation" value="3 sites, 1 O-linked glycan (1 site)"/>
</dbReference>
<dbReference type="iPTMnet" id="Q9BRQ0"/>
<dbReference type="PhosphoSitePlus" id="Q9BRQ0"/>
<dbReference type="BioMuta" id="PYGO2"/>
<dbReference type="DMDM" id="23396825"/>
<dbReference type="jPOST" id="Q9BRQ0"/>
<dbReference type="MassIVE" id="Q9BRQ0"/>
<dbReference type="PaxDb" id="9606-ENSP00000357442"/>
<dbReference type="PeptideAtlas" id="Q9BRQ0"/>
<dbReference type="ProteomicsDB" id="78801"/>
<dbReference type="Pumba" id="Q9BRQ0"/>
<dbReference type="Antibodypedia" id="20404">
    <property type="antibodies" value="154 antibodies from 32 providers"/>
</dbReference>
<dbReference type="DNASU" id="90780"/>
<dbReference type="Ensembl" id="ENST00000368457.3">
    <property type="protein sequence ID" value="ENSP00000357442.2"/>
    <property type="gene ID" value="ENSG00000163348.4"/>
</dbReference>
<dbReference type="GeneID" id="90780"/>
<dbReference type="KEGG" id="hsa:90780"/>
<dbReference type="MANE-Select" id="ENST00000368457.3">
    <property type="protein sequence ID" value="ENSP00000357442.2"/>
    <property type="RefSeq nucleotide sequence ID" value="NM_138300.4"/>
    <property type="RefSeq protein sequence ID" value="NP_612157.1"/>
</dbReference>
<dbReference type="UCSC" id="uc001fft.4">
    <property type="organism name" value="human"/>
</dbReference>
<dbReference type="AGR" id="HGNC:30257"/>
<dbReference type="CTD" id="90780"/>
<dbReference type="DisGeNET" id="90780"/>
<dbReference type="GeneCards" id="PYGO2"/>
<dbReference type="HGNC" id="HGNC:30257">
    <property type="gene designation" value="PYGO2"/>
</dbReference>
<dbReference type="HPA" id="ENSG00000163348">
    <property type="expression patterns" value="Low tissue specificity"/>
</dbReference>
<dbReference type="MIM" id="606903">
    <property type="type" value="gene"/>
</dbReference>
<dbReference type="neXtProt" id="NX_Q9BRQ0"/>
<dbReference type="OpenTargets" id="ENSG00000163348"/>
<dbReference type="PharmGKB" id="PA134881185"/>
<dbReference type="VEuPathDB" id="HostDB:ENSG00000163348"/>
<dbReference type="eggNOG" id="ENOG502QSRS">
    <property type="taxonomic scope" value="Eukaryota"/>
</dbReference>
<dbReference type="GeneTree" id="ENSGT00530000063948"/>
<dbReference type="InParanoid" id="Q9BRQ0"/>
<dbReference type="OMA" id="TFAQEQH"/>
<dbReference type="OrthoDB" id="270215at2759"/>
<dbReference type="PAN-GO" id="Q9BRQ0">
    <property type="GO annotations" value="2 GO annotations based on evolutionary models"/>
</dbReference>
<dbReference type="PhylomeDB" id="Q9BRQ0"/>
<dbReference type="TreeFam" id="TF333020"/>
<dbReference type="PathwayCommons" id="Q9BRQ0"/>
<dbReference type="Reactome" id="R-HSA-201722">
    <property type="pathway name" value="Formation of the beta-catenin:TCF transactivating complex"/>
</dbReference>
<dbReference type="Reactome" id="R-HSA-3769402">
    <property type="pathway name" value="Deactivation of the beta-catenin transactivating complex"/>
</dbReference>
<dbReference type="SignaLink" id="Q9BRQ0"/>
<dbReference type="SIGNOR" id="Q9BRQ0"/>
<dbReference type="BioGRID-ORCS" id="90780">
    <property type="hits" value="23 hits in 1165 CRISPR screens"/>
</dbReference>
<dbReference type="ChiTaRS" id="PYGO2">
    <property type="organism name" value="human"/>
</dbReference>
<dbReference type="GeneWiki" id="PYGO2"/>
<dbReference type="GenomeRNAi" id="90780"/>
<dbReference type="Pharos" id="Q9BRQ0">
    <property type="development level" value="Tbio"/>
</dbReference>
<dbReference type="PRO" id="PR:Q9BRQ0"/>
<dbReference type="Proteomes" id="UP000005640">
    <property type="component" value="Chromosome 1"/>
</dbReference>
<dbReference type="RNAct" id="Q9BRQ0">
    <property type="molecule type" value="protein"/>
</dbReference>
<dbReference type="Bgee" id="ENSG00000163348">
    <property type="expression patterns" value="Expressed in kidney epithelium and 177 other cell types or tissues"/>
</dbReference>
<dbReference type="ExpressionAtlas" id="Q9BRQ0">
    <property type="expression patterns" value="baseline and differential"/>
</dbReference>
<dbReference type="GO" id="GO:1990907">
    <property type="term" value="C:beta-catenin-TCF complex"/>
    <property type="evidence" value="ECO:0000314"/>
    <property type="project" value="FlyBase"/>
</dbReference>
<dbReference type="GO" id="GO:0005654">
    <property type="term" value="C:nucleoplasm"/>
    <property type="evidence" value="ECO:0000304"/>
    <property type="project" value="Reactome"/>
</dbReference>
<dbReference type="GO" id="GO:0003682">
    <property type="term" value="F:chromatin binding"/>
    <property type="evidence" value="ECO:0007669"/>
    <property type="project" value="Ensembl"/>
</dbReference>
<dbReference type="GO" id="GO:0035034">
    <property type="term" value="F:histone acetyltransferase regulator activity"/>
    <property type="evidence" value="ECO:0007669"/>
    <property type="project" value="Ensembl"/>
</dbReference>
<dbReference type="GO" id="GO:0042393">
    <property type="term" value="F:histone binding"/>
    <property type="evidence" value="ECO:0007669"/>
    <property type="project" value="Ensembl"/>
</dbReference>
<dbReference type="GO" id="GO:0008270">
    <property type="term" value="F:zinc ion binding"/>
    <property type="evidence" value="ECO:0007669"/>
    <property type="project" value="UniProtKB-KW"/>
</dbReference>
<dbReference type="GO" id="GO:0007420">
    <property type="term" value="P:brain development"/>
    <property type="evidence" value="ECO:0007669"/>
    <property type="project" value="Ensembl"/>
</dbReference>
<dbReference type="GO" id="GO:0060070">
    <property type="term" value="P:canonical Wnt signaling pathway"/>
    <property type="evidence" value="ECO:0007669"/>
    <property type="project" value="Ensembl"/>
</dbReference>
<dbReference type="GO" id="GO:0048589">
    <property type="term" value="P:developmental growth"/>
    <property type="evidence" value="ECO:0007669"/>
    <property type="project" value="Ensembl"/>
</dbReference>
<dbReference type="GO" id="GO:0001822">
    <property type="term" value="P:kidney development"/>
    <property type="evidence" value="ECO:0000318"/>
    <property type="project" value="GO_Central"/>
</dbReference>
<dbReference type="GO" id="GO:0002088">
    <property type="term" value="P:lens development in camera-type eye"/>
    <property type="evidence" value="ECO:0007669"/>
    <property type="project" value="Ensembl"/>
</dbReference>
<dbReference type="GO" id="GO:0030879">
    <property type="term" value="P:mammary gland development"/>
    <property type="evidence" value="ECO:0007669"/>
    <property type="project" value="Ensembl"/>
</dbReference>
<dbReference type="GO" id="GO:0033599">
    <property type="term" value="P:regulation of mammary gland epithelial cell proliferation"/>
    <property type="evidence" value="ECO:0007669"/>
    <property type="project" value="Ensembl"/>
</dbReference>
<dbReference type="GO" id="GO:0060021">
    <property type="term" value="P:roof of mouth development"/>
    <property type="evidence" value="ECO:0007669"/>
    <property type="project" value="Ensembl"/>
</dbReference>
<dbReference type="GO" id="GO:0007289">
    <property type="term" value="P:spermatid nucleus differentiation"/>
    <property type="evidence" value="ECO:0000318"/>
    <property type="project" value="GO_Central"/>
</dbReference>
<dbReference type="CDD" id="cd15636">
    <property type="entry name" value="PHD_PYGO2"/>
    <property type="match status" value="1"/>
</dbReference>
<dbReference type="FunFam" id="3.30.40.10:FF:000107">
    <property type="entry name" value="pygopus homolog 1"/>
    <property type="match status" value="1"/>
</dbReference>
<dbReference type="Gene3D" id="3.30.40.10">
    <property type="entry name" value="Zinc/RING finger domain, C3HC4 (zinc finger)"/>
    <property type="match status" value="1"/>
</dbReference>
<dbReference type="InterPro" id="IPR052475">
    <property type="entry name" value="Wnt_Signal_Transd_Protein"/>
</dbReference>
<dbReference type="InterPro" id="IPR019786">
    <property type="entry name" value="Zinc_finger_PHD-type_CS"/>
</dbReference>
<dbReference type="InterPro" id="IPR011011">
    <property type="entry name" value="Znf_FYVE_PHD"/>
</dbReference>
<dbReference type="InterPro" id="IPR001965">
    <property type="entry name" value="Znf_PHD"/>
</dbReference>
<dbReference type="InterPro" id="IPR019787">
    <property type="entry name" value="Znf_PHD-finger"/>
</dbReference>
<dbReference type="InterPro" id="IPR013083">
    <property type="entry name" value="Znf_RING/FYVE/PHD"/>
</dbReference>
<dbReference type="PANTHER" id="PTHR23194">
    <property type="entry name" value="PYGOPUS"/>
    <property type="match status" value="1"/>
</dbReference>
<dbReference type="PANTHER" id="PTHR23194:SF7">
    <property type="entry name" value="PYGOPUS HOMOLOG 2"/>
    <property type="match status" value="1"/>
</dbReference>
<dbReference type="Pfam" id="PF00628">
    <property type="entry name" value="PHD"/>
    <property type="match status" value="1"/>
</dbReference>
<dbReference type="SMART" id="SM00249">
    <property type="entry name" value="PHD"/>
    <property type="match status" value="1"/>
</dbReference>
<dbReference type="SUPFAM" id="SSF57903">
    <property type="entry name" value="FYVE/PHD zinc finger"/>
    <property type="match status" value="1"/>
</dbReference>
<dbReference type="PROSITE" id="PS01359">
    <property type="entry name" value="ZF_PHD_1"/>
    <property type="match status" value="1"/>
</dbReference>
<dbReference type="PROSITE" id="PS50016">
    <property type="entry name" value="ZF_PHD_2"/>
    <property type="match status" value="1"/>
</dbReference>
<name>PYGO2_HUMAN</name>
<reference key="1">
    <citation type="journal article" date="2002" name="Cell">
        <title>Wnt/wingless signaling requires BCL9/legless-mediated recruitment of pygopus to the nuclear beta-catenin-TCF complex.</title>
        <authorList>
            <person name="Kramps T."/>
            <person name="Peter O."/>
            <person name="Brunner E."/>
            <person name="Nellen D."/>
            <person name="Froesch B."/>
            <person name="Chatterjee S."/>
            <person name="Murone M."/>
            <person name="Zuellig S."/>
            <person name="Basler K."/>
        </authorList>
    </citation>
    <scope>NUCLEOTIDE SEQUENCE [MRNA]</scope>
</reference>
<reference key="2">
    <citation type="journal article" date="2004" name="Genome Res.">
        <title>The status, quality, and expansion of the NIH full-length cDNA project: the Mammalian Gene Collection (MGC).</title>
        <authorList>
            <consortium name="The MGC Project Team"/>
        </authorList>
    </citation>
    <scope>NUCLEOTIDE SEQUENCE [LARGE SCALE MRNA]</scope>
    <source>
        <tissue>Brain</tissue>
        <tissue>Ovary</tissue>
    </source>
</reference>
<reference key="3">
    <citation type="journal article" date="2004" name="Proc. Natl. Acad. Sci. U.S.A.">
        <title>Large-scale cDNA transfection screening for genes related to cancer development and progression.</title>
        <authorList>
            <person name="Wan D."/>
            <person name="Gong Y."/>
            <person name="Qin W."/>
            <person name="Zhang P."/>
            <person name="Li J."/>
            <person name="Wei L."/>
            <person name="Zhou X."/>
            <person name="Li H."/>
            <person name="Qiu X."/>
            <person name="Zhong F."/>
            <person name="He L."/>
            <person name="Yu J."/>
            <person name="Yao G."/>
            <person name="Jiang H."/>
            <person name="Qian L."/>
            <person name="Yu Y."/>
            <person name="Shu H."/>
            <person name="Chen X."/>
            <person name="Xu H."/>
            <person name="Guo M."/>
            <person name="Pan Z."/>
            <person name="Chen Y."/>
            <person name="Ge C."/>
            <person name="Yang S."/>
            <person name="Gu J."/>
        </authorList>
    </citation>
    <scope>NUCLEOTIDE SEQUENCE [LARGE SCALE MRNA] OF 15-406</scope>
</reference>
<reference key="4">
    <citation type="journal article" date="2008" name="Proc. Natl. Acad. Sci. U.S.A.">
        <title>A quantitative atlas of mitotic phosphorylation.</title>
        <authorList>
            <person name="Dephoure N."/>
            <person name="Zhou C."/>
            <person name="Villen J."/>
            <person name="Beausoleil S.A."/>
            <person name="Bakalarski C.E."/>
            <person name="Elledge S.J."/>
            <person name="Gygi S.P."/>
        </authorList>
    </citation>
    <scope>PHOSPHORYLATION [LARGE SCALE ANALYSIS] AT THR-302</scope>
    <scope>IDENTIFICATION BY MASS SPECTROMETRY [LARGE SCALE ANALYSIS]</scope>
    <source>
        <tissue>Cervix carcinoma</tissue>
    </source>
</reference>
<reference key="5">
    <citation type="journal article" date="2009" name="Anal. Chem.">
        <title>Lys-N and trypsin cover complementary parts of the phosphoproteome in a refined SCX-based approach.</title>
        <authorList>
            <person name="Gauci S."/>
            <person name="Helbig A.O."/>
            <person name="Slijper M."/>
            <person name="Krijgsveld J."/>
            <person name="Heck A.J."/>
            <person name="Mohammed S."/>
        </authorList>
    </citation>
    <scope>ACETYLATION [LARGE SCALE ANALYSIS] AT ALA-2</scope>
    <scope>CLEAVAGE OF INITIATOR METHIONINE [LARGE SCALE ANALYSIS]</scope>
    <scope>IDENTIFICATION BY MASS SPECTROMETRY [LARGE SCALE ANALYSIS]</scope>
</reference>
<reference key="6">
    <citation type="journal article" date="2010" name="Sci. Signal.">
        <title>Quantitative phosphoproteomics reveals widespread full phosphorylation site occupancy during mitosis.</title>
        <authorList>
            <person name="Olsen J.V."/>
            <person name="Vermeulen M."/>
            <person name="Santamaria A."/>
            <person name="Kumar C."/>
            <person name="Miller M.L."/>
            <person name="Jensen L.J."/>
            <person name="Gnad F."/>
            <person name="Cox J."/>
            <person name="Jensen T.S."/>
            <person name="Nigg E.A."/>
            <person name="Brunak S."/>
            <person name="Mann M."/>
        </authorList>
    </citation>
    <scope>PHOSPHORYLATION [LARGE SCALE ANALYSIS] AT THR-302</scope>
    <scope>IDENTIFICATION BY MASS SPECTROMETRY [LARGE SCALE ANALYSIS]</scope>
    <source>
        <tissue>Cervix carcinoma</tissue>
    </source>
</reference>
<reference key="7">
    <citation type="journal article" date="2011" name="Sci. Signal.">
        <title>System-wide temporal characterization of the proteome and phosphoproteome of human embryonic stem cell differentiation.</title>
        <authorList>
            <person name="Rigbolt K.T."/>
            <person name="Prokhorova T.A."/>
            <person name="Akimov V."/>
            <person name="Henningsen J."/>
            <person name="Johansen P.T."/>
            <person name="Kratchmarova I."/>
            <person name="Kassem M."/>
            <person name="Mann M."/>
            <person name="Olsen J.V."/>
            <person name="Blagoev B."/>
        </authorList>
    </citation>
    <scope>PHOSPHORYLATION [LARGE SCALE ANALYSIS] AT SER-40</scope>
    <scope>IDENTIFICATION BY MASS SPECTROMETRY [LARGE SCALE ANALYSIS]</scope>
</reference>
<reference key="8">
    <citation type="journal article" date="2013" name="J. Proteome Res.">
        <title>Toward a comprehensive characterization of a human cancer cell phosphoproteome.</title>
        <authorList>
            <person name="Zhou H."/>
            <person name="Di Palma S."/>
            <person name="Preisinger C."/>
            <person name="Peng M."/>
            <person name="Polat A.N."/>
            <person name="Heck A.J."/>
            <person name="Mohammed S."/>
        </authorList>
    </citation>
    <scope>PHOSPHORYLATION [LARGE SCALE ANALYSIS] AT SER-40 AND THR-302</scope>
    <scope>IDENTIFICATION BY MASS SPECTROMETRY [LARGE SCALE ANALYSIS]</scope>
    <source>
        <tissue>Cervix carcinoma</tissue>
        <tissue>Erythroleukemia</tissue>
    </source>
</reference>
<reference key="9">
    <citation type="journal article" date="2014" name="J. Proteomics">
        <title>An enzyme assisted RP-RPLC approach for in-depth analysis of human liver phosphoproteome.</title>
        <authorList>
            <person name="Bian Y."/>
            <person name="Song C."/>
            <person name="Cheng K."/>
            <person name="Dong M."/>
            <person name="Wang F."/>
            <person name="Huang J."/>
            <person name="Sun D."/>
            <person name="Wang L."/>
            <person name="Ye M."/>
            <person name="Zou H."/>
        </authorList>
    </citation>
    <scope>PHOSPHORYLATION [LARGE SCALE ANALYSIS] AT THR-302</scope>
    <scope>IDENTIFICATION BY MASS SPECTROMETRY [LARGE SCALE ANALYSIS]</scope>
    <source>
        <tissue>Liver</tissue>
    </source>
</reference>
<comment type="function">
    <text>Involved in signal transduction through the Wnt pathway.</text>
</comment>
<comment type="subunit">
    <text>Binds to BCL9 via the PHD-type zinc finger motif, and thereby becomes part of the nuclear beta-catenin/TCF complex.</text>
</comment>
<comment type="interaction">
    <interactant intactId="EBI-932471">
        <id>Q9BRQ0</id>
    </interactant>
    <interactant intactId="EBI-533127">
        <id>O00512</id>
        <label>BCL9</label>
    </interactant>
    <organismsDiffer>false</organismsDiffer>
    <experiments>3</experiments>
</comment>
<comment type="interaction">
    <interactant intactId="EBI-932471">
        <id>Q9BRQ0</id>
    </interactant>
    <interactant intactId="EBI-7484437">
        <id>Q9UPU3</id>
        <label>SORCS3</label>
    </interactant>
    <organismsDiffer>false</organismsDiffer>
    <experiments>3</experiments>
</comment>
<comment type="subcellular location">
    <subcellularLocation>
        <location evidence="4">Nucleus</location>
    </subcellularLocation>
</comment>
<comment type="sequence caution" evidence="4">
    <conflict type="miscellaneous discrepancy">
        <sequence resource="EMBL-CDS" id="AAL55782"/>
    </conflict>
    <text>Sequencing errors.</text>
</comment>
<gene>
    <name type="primary">PYGO2</name>
    <name type="ORF">PP7910</name>
</gene>